<reference key="1">
    <citation type="submission" date="2008-06" db="EMBL/GenBank/DDBJ databases">
        <title>Complete sequence of Stenotrophomonas maltophilia R551-3.</title>
        <authorList>
            <consortium name="US DOE Joint Genome Institute"/>
            <person name="Lucas S."/>
            <person name="Copeland A."/>
            <person name="Lapidus A."/>
            <person name="Glavina del Rio T."/>
            <person name="Dalin E."/>
            <person name="Tice H."/>
            <person name="Pitluck S."/>
            <person name="Chain P."/>
            <person name="Malfatti S."/>
            <person name="Shin M."/>
            <person name="Vergez L."/>
            <person name="Lang D."/>
            <person name="Schmutz J."/>
            <person name="Larimer F."/>
            <person name="Land M."/>
            <person name="Hauser L."/>
            <person name="Kyrpides N."/>
            <person name="Mikhailova N."/>
            <person name="Taghavi S."/>
            <person name="Monchy S."/>
            <person name="Newman L."/>
            <person name="Vangronsveld J."/>
            <person name="van der Lelie D."/>
            <person name="Richardson P."/>
        </authorList>
    </citation>
    <scope>NUCLEOTIDE SEQUENCE [LARGE SCALE GENOMIC DNA]</scope>
    <source>
        <strain>R551-3</strain>
    </source>
</reference>
<protein>
    <recommendedName>
        <fullName evidence="1">4-hydroxy-3-methylbut-2-enyl diphosphate reductase</fullName>
        <shortName evidence="1">HMBPP reductase</shortName>
        <ecNumber evidence="1">1.17.7.4</ecNumber>
    </recommendedName>
</protein>
<sequence length="316" mass="34629">MDVLLANPRGFCAGVDRAIEIVKRAIETLGAPIYVRHEVVHNRFVVDDLKQRGAIFVEELDEVPDNNTVIFSAHGVSQAVRQEAERRGLKVFDATCPLVTKVHFEVARHCRAGRDVVLIGHAGHPEVEGTMGQWNREAGTGQIYLVEDVEQVATLQIKQPENFAYTTQTTLSVDDTRGIIDALRERFPAMQGPKNDDICYATQNRQDAVRDLAKRCDLVLVVGSPNSSNSNRLSELARREGVESYLIDGAHEIDPAWVVGKQHIGVTAGASAPQVLVDGVLARLAELGANGVGELDGEPESMVFALPKELRLRLVD</sequence>
<accession>B4SP20</accession>
<comment type="function">
    <text evidence="1">Catalyzes the conversion of 1-hydroxy-2-methyl-2-(E)-butenyl 4-diphosphate (HMBPP) into a mixture of isopentenyl diphosphate (IPP) and dimethylallyl diphosphate (DMAPP). Acts in the terminal step of the DOXP/MEP pathway for isoprenoid precursor biosynthesis.</text>
</comment>
<comment type="catalytic activity">
    <reaction evidence="1">
        <text>isopentenyl diphosphate + 2 oxidized [2Fe-2S]-[ferredoxin] + H2O = (2E)-4-hydroxy-3-methylbut-2-enyl diphosphate + 2 reduced [2Fe-2S]-[ferredoxin] + 2 H(+)</text>
        <dbReference type="Rhea" id="RHEA:24488"/>
        <dbReference type="Rhea" id="RHEA-COMP:10000"/>
        <dbReference type="Rhea" id="RHEA-COMP:10001"/>
        <dbReference type="ChEBI" id="CHEBI:15377"/>
        <dbReference type="ChEBI" id="CHEBI:15378"/>
        <dbReference type="ChEBI" id="CHEBI:33737"/>
        <dbReference type="ChEBI" id="CHEBI:33738"/>
        <dbReference type="ChEBI" id="CHEBI:128753"/>
        <dbReference type="ChEBI" id="CHEBI:128769"/>
        <dbReference type="EC" id="1.17.7.4"/>
    </reaction>
</comment>
<comment type="catalytic activity">
    <reaction evidence="1">
        <text>dimethylallyl diphosphate + 2 oxidized [2Fe-2S]-[ferredoxin] + H2O = (2E)-4-hydroxy-3-methylbut-2-enyl diphosphate + 2 reduced [2Fe-2S]-[ferredoxin] + 2 H(+)</text>
        <dbReference type="Rhea" id="RHEA:24825"/>
        <dbReference type="Rhea" id="RHEA-COMP:10000"/>
        <dbReference type="Rhea" id="RHEA-COMP:10001"/>
        <dbReference type="ChEBI" id="CHEBI:15377"/>
        <dbReference type="ChEBI" id="CHEBI:15378"/>
        <dbReference type="ChEBI" id="CHEBI:33737"/>
        <dbReference type="ChEBI" id="CHEBI:33738"/>
        <dbReference type="ChEBI" id="CHEBI:57623"/>
        <dbReference type="ChEBI" id="CHEBI:128753"/>
        <dbReference type="EC" id="1.17.7.4"/>
    </reaction>
</comment>
<comment type="cofactor">
    <cofactor evidence="1">
        <name>[4Fe-4S] cluster</name>
        <dbReference type="ChEBI" id="CHEBI:49883"/>
    </cofactor>
    <text evidence="1">Binds 1 [4Fe-4S] cluster per subunit.</text>
</comment>
<comment type="pathway">
    <text evidence="1">Isoprenoid biosynthesis; dimethylallyl diphosphate biosynthesis; dimethylallyl diphosphate from (2E)-4-hydroxy-3-methylbutenyl diphosphate: step 1/1.</text>
</comment>
<comment type="pathway">
    <text evidence="1">Isoprenoid biosynthesis; isopentenyl diphosphate biosynthesis via DXP pathway; isopentenyl diphosphate from 1-deoxy-D-xylulose 5-phosphate: step 6/6.</text>
</comment>
<comment type="similarity">
    <text evidence="1">Belongs to the IspH family.</text>
</comment>
<organism>
    <name type="scientific">Stenotrophomonas maltophilia (strain R551-3)</name>
    <dbReference type="NCBI Taxonomy" id="391008"/>
    <lineage>
        <taxon>Bacteria</taxon>
        <taxon>Pseudomonadati</taxon>
        <taxon>Pseudomonadota</taxon>
        <taxon>Gammaproteobacteria</taxon>
        <taxon>Lysobacterales</taxon>
        <taxon>Lysobacteraceae</taxon>
        <taxon>Stenotrophomonas</taxon>
        <taxon>Stenotrophomonas maltophilia group</taxon>
    </lineage>
</organism>
<gene>
    <name evidence="1" type="primary">ispH</name>
    <name type="ordered locus">Smal_1127</name>
</gene>
<name>ISPH_STRM5</name>
<proteinExistence type="inferred from homology"/>
<keyword id="KW-0004">4Fe-4S</keyword>
<keyword id="KW-0408">Iron</keyword>
<keyword id="KW-0411">Iron-sulfur</keyword>
<keyword id="KW-0414">Isoprene biosynthesis</keyword>
<keyword id="KW-0479">Metal-binding</keyword>
<keyword id="KW-0560">Oxidoreductase</keyword>
<feature type="chain" id="PRO_1000098979" description="4-hydroxy-3-methylbut-2-enyl diphosphate reductase">
    <location>
        <begin position="1"/>
        <end position="316"/>
    </location>
</feature>
<feature type="active site" description="Proton donor" evidence="1">
    <location>
        <position position="126"/>
    </location>
</feature>
<feature type="binding site" evidence="1">
    <location>
        <position position="12"/>
    </location>
    <ligand>
        <name>[4Fe-4S] cluster</name>
        <dbReference type="ChEBI" id="CHEBI:49883"/>
    </ligand>
</feature>
<feature type="binding site" evidence="1">
    <location>
        <position position="41"/>
    </location>
    <ligand>
        <name>(2E)-4-hydroxy-3-methylbut-2-enyl diphosphate</name>
        <dbReference type="ChEBI" id="CHEBI:128753"/>
    </ligand>
</feature>
<feature type="binding site" evidence="1">
    <location>
        <position position="41"/>
    </location>
    <ligand>
        <name>dimethylallyl diphosphate</name>
        <dbReference type="ChEBI" id="CHEBI:57623"/>
    </ligand>
</feature>
<feature type="binding site" evidence="1">
    <location>
        <position position="41"/>
    </location>
    <ligand>
        <name>isopentenyl diphosphate</name>
        <dbReference type="ChEBI" id="CHEBI:128769"/>
    </ligand>
</feature>
<feature type="binding site" evidence="1">
    <location>
        <position position="74"/>
    </location>
    <ligand>
        <name>(2E)-4-hydroxy-3-methylbut-2-enyl diphosphate</name>
        <dbReference type="ChEBI" id="CHEBI:128753"/>
    </ligand>
</feature>
<feature type="binding site" evidence="1">
    <location>
        <position position="74"/>
    </location>
    <ligand>
        <name>dimethylallyl diphosphate</name>
        <dbReference type="ChEBI" id="CHEBI:57623"/>
    </ligand>
</feature>
<feature type="binding site" evidence="1">
    <location>
        <position position="74"/>
    </location>
    <ligand>
        <name>isopentenyl diphosphate</name>
        <dbReference type="ChEBI" id="CHEBI:128769"/>
    </ligand>
</feature>
<feature type="binding site" evidence="1">
    <location>
        <position position="96"/>
    </location>
    <ligand>
        <name>[4Fe-4S] cluster</name>
        <dbReference type="ChEBI" id="CHEBI:49883"/>
    </ligand>
</feature>
<feature type="binding site" evidence="1">
    <location>
        <position position="124"/>
    </location>
    <ligand>
        <name>(2E)-4-hydroxy-3-methylbut-2-enyl diphosphate</name>
        <dbReference type="ChEBI" id="CHEBI:128753"/>
    </ligand>
</feature>
<feature type="binding site" evidence="1">
    <location>
        <position position="124"/>
    </location>
    <ligand>
        <name>dimethylallyl diphosphate</name>
        <dbReference type="ChEBI" id="CHEBI:57623"/>
    </ligand>
</feature>
<feature type="binding site" evidence="1">
    <location>
        <position position="124"/>
    </location>
    <ligand>
        <name>isopentenyl diphosphate</name>
        <dbReference type="ChEBI" id="CHEBI:128769"/>
    </ligand>
</feature>
<feature type="binding site" evidence="1">
    <location>
        <position position="169"/>
    </location>
    <ligand>
        <name>(2E)-4-hydroxy-3-methylbut-2-enyl diphosphate</name>
        <dbReference type="ChEBI" id="CHEBI:128753"/>
    </ligand>
</feature>
<feature type="binding site" evidence="1">
    <location>
        <position position="199"/>
    </location>
    <ligand>
        <name>[4Fe-4S] cluster</name>
        <dbReference type="ChEBI" id="CHEBI:49883"/>
    </ligand>
</feature>
<feature type="binding site" evidence="1">
    <location>
        <position position="227"/>
    </location>
    <ligand>
        <name>(2E)-4-hydroxy-3-methylbut-2-enyl diphosphate</name>
        <dbReference type="ChEBI" id="CHEBI:128753"/>
    </ligand>
</feature>
<feature type="binding site" evidence="1">
    <location>
        <position position="227"/>
    </location>
    <ligand>
        <name>dimethylallyl diphosphate</name>
        <dbReference type="ChEBI" id="CHEBI:57623"/>
    </ligand>
</feature>
<feature type="binding site" evidence="1">
    <location>
        <position position="227"/>
    </location>
    <ligand>
        <name>isopentenyl diphosphate</name>
        <dbReference type="ChEBI" id="CHEBI:128769"/>
    </ligand>
</feature>
<feature type="binding site" evidence="1">
    <location>
        <position position="228"/>
    </location>
    <ligand>
        <name>(2E)-4-hydroxy-3-methylbut-2-enyl diphosphate</name>
        <dbReference type="ChEBI" id="CHEBI:128753"/>
    </ligand>
</feature>
<feature type="binding site" evidence="1">
    <location>
        <position position="228"/>
    </location>
    <ligand>
        <name>dimethylallyl diphosphate</name>
        <dbReference type="ChEBI" id="CHEBI:57623"/>
    </ligand>
</feature>
<feature type="binding site" evidence="1">
    <location>
        <position position="228"/>
    </location>
    <ligand>
        <name>isopentenyl diphosphate</name>
        <dbReference type="ChEBI" id="CHEBI:128769"/>
    </ligand>
</feature>
<feature type="binding site" evidence="1">
    <location>
        <position position="229"/>
    </location>
    <ligand>
        <name>(2E)-4-hydroxy-3-methylbut-2-enyl diphosphate</name>
        <dbReference type="ChEBI" id="CHEBI:128753"/>
    </ligand>
</feature>
<feature type="binding site" evidence="1">
    <location>
        <position position="229"/>
    </location>
    <ligand>
        <name>dimethylallyl diphosphate</name>
        <dbReference type="ChEBI" id="CHEBI:57623"/>
    </ligand>
</feature>
<feature type="binding site" evidence="1">
    <location>
        <position position="229"/>
    </location>
    <ligand>
        <name>isopentenyl diphosphate</name>
        <dbReference type="ChEBI" id="CHEBI:128769"/>
    </ligand>
</feature>
<feature type="binding site" evidence="1">
    <location>
        <position position="271"/>
    </location>
    <ligand>
        <name>(2E)-4-hydroxy-3-methylbut-2-enyl diphosphate</name>
        <dbReference type="ChEBI" id="CHEBI:128753"/>
    </ligand>
</feature>
<feature type="binding site" evidence="1">
    <location>
        <position position="271"/>
    </location>
    <ligand>
        <name>dimethylallyl diphosphate</name>
        <dbReference type="ChEBI" id="CHEBI:57623"/>
    </ligand>
</feature>
<feature type="binding site" evidence="1">
    <location>
        <position position="271"/>
    </location>
    <ligand>
        <name>isopentenyl diphosphate</name>
        <dbReference type="ChEBI" id="CHEBI:128769"/>
    </ligand>
</feature>
<dbReference type="EC" id="1.17.7.4" evidence="1"/>
<dbReference type="EMBL" id="CP001111">
    <property type="protein sequence ID" value="ACF50832.1"/>
    <property type="molecule type" value="Genomic_DNA"/>
</dbReference>
<dbReference type="RefSeq" id="WP_004148461.1">
    <property type="nucleotide sequence ID" value="NC_011071.1"/>
</dbReference>
<dbReference type="SMR" id="B4SP20"/>
<dbReference type="STRING" id="391008.Smal_1127"/>
<dbReference type="KEGG" id="smt:Smal_1127"/>
<dbReference type="eggNOG" id="COG0761">
    <property type="taxonomic scope" value="Bacteria"/>
</dbReference>
<dbReference type="HOGENOM" id="CLU_027486_1_0_6"/>
<dbReference type="OrthoDB" id="9804068at2"/>
<dbReference type="UniPathway" id="UPA00056">
    <property type="reaction ID" value="UER00097"/>
</dbReference>
<dbReference type="UniPathway" id="UPA00059">
    <property type="reaction ID" value="UER00105"/>
</dbReference>
<dbReference type="Proteomes" id="UP000001867">
    <property type="component" value="Chromosome"/>
</dbReference>
<dbReference type="GO" id="GO:0051539">
    <property type="term" value="F:4 iron, 4 sulfur cluster binding"/>
    <property type="evidence" value="ECO:0007669"/>
    <property type="project" value="UniProtKB-UniRule"/>
</dbReference>
<dbReference type="GO" id="GO:0051745">
    <property type="term" value="F:4-hydroxy-3-methylbut-2-enyl diphosphate reductase activity"/>
    <property type="evidence" value="ECO:0007669"/>
    <property type="project" value="UniProtKB-UniRule"/>
</dbReference>
<dbReference type="GO" id="GO:0046872">
    <property type="term" value="F:metal ion binding"/>
    <property type="evidence" value="ECO:0007669"/>
    <property type="project" value="UniProtKB-KW"/>
</dbReference>
<dbReference type="GO" id="GO:0050992">
    <property type="term" value="P:dimethylallyl diphosphate biosynthetic process"/>
    <property type="evidence" value="ECO:0007669"/>
    <property type="project" value="UniProtKB-UniRule"/>
</dbReference>
<dbReference type="GO" id="GO:0019288">
    <property type="term" value="P:isopentenyl diphosphate biosynthetic process, methylerythritol 4-phosphate pathway"/>
    <property type="evidence" value="ECO:0007669"/>
    <property type="project" value="UniProtKB-UniRule"/>
</dbReference>
<dbReference type="GO" id="GO:0016114">
    <property type="term" value="P:terpenoid biosynthetic process"/>
    <property type="evidence" value="ECO:0007669"/>
    <property type="project" value="UniProtKB-UniRule"/>
</dbReference>
<dbReference type="CDD" id="cd13944">
    <property type="entry name" value="lytB_ispH"/>
    <property type="match status" value="1"/>
</dbReference>
<dbReference type="Gene3D" id="3.40.50.11270">
    <property type="match status" value="1"/>
</dbReference>
<dbReference type="Gene3D" id="3.40.1010.20">
    <property type="entry name" value="4-hydroxy-3-methylbut-2-enyl diphosphate reductase, catalytic domain"/>
    <property type="match status" value="2"/>
</dbReference>
<dbReference type="HAMAP" id="MF_00191">
    <property type="entry name" value="IspH"/>
    <property type="match status" value="1"/>
</dbReference>
<dbReference type="InterPro" id="IPR003451">
    <property type="entry name" value="LytB/IspH"/>
</dbReference>
<dbReference type="NCBIfam" id="TIGR00216">
    <property type="entry name" value="ispH_lytB"/>
    <property type="match status" value="1"/>
</dbReference>
<dbReference type="NCBIfam" id="NF002188">
    <property type="entry name" value="PRK01045.1-2"/>
    <property type="match status" value="1"/>
</dbReference>
<dbReference type="NCBIfam" id="NF002190">
    <property type="entry name" value="PRK01045.1-4"/>
    <property type="match status" value="1"/>
</dbReference>
<dbReference type="PANTHER" id="PTHR30426">
    <property type="entry name" value="4-HYDROXY-3-METHYLBUT-2-ENYL DIPHOSPHATE REDUCTASE"/>
    <property type="match status" value="1"/>
</dbReference>
<dbReference type="PANTHER" id="PTHR30426:SF0">
    <property type="entry name" value="4-HYDROXY-3-METHYLBUT-2-ENYL DIPHOSPHATE REDUCTASE"/>
    <property type="match status" value="1"/>
</dbReference>
<dbReference type="Pfam" id="PF02401">
    <property type="entry name" value="LYTB"/>
    <property type="match status" value="1"/>
</dbReference>
<evidence type="ECO:0000255" key="1">
    <source>
        <dbReference type="HAMAP-Rule" id="MF_00191"/>
    </source>
</evidence>